<name>EFG_THEFY</name>
<comment type="function">
    <text evidence="1">Catalyzes the GTP-dependent ribosomal translocation step during translation elongation. During this step, the ribosome changes from the pre-translocational (PRE) to the post-translocational (POST) state as the newly formed A-site-bound peptidyl-tRNA and P-site-bound deacylated tRNA move to the P and E sites, respectively. Catalyzes the coordinated movement of the two tRNA molecules, the mRNA and conformational changes in the ribosome.</text>
</comment>
<comment type="subcellular location">
    <subcellularLocation>
        <location evidence="1">Cytoplasm</location>
    </subcellularLocation>
</comment>
<comment type="similarity">
    <text evidence="1">Belongs to the TRAFAC class translation factor GTPase superfamily. Classic translation factor GTPase family. EF-G/EF-2 subfamily.</text>
</comment>
<protein>
    <recommendedName>
        <fullName evidence="1">Elongation factor G</fullName>
        <shortName evidence="1">EF-G</shortName>
    </recommendedName>
</protein>
<proteinExistence type="inferred from homology"/>
<keyword id="KW-0963">Cytoplasm</keyword>
<keyword id="KW-0251">Elongation factor</keyword>
<keyword id="KW-0342">GTP-binding</keyword>
<keyword id="KW-0547">Nucleotide-binding</keyword>
<keyword id="KW-0648">Protein biosynthesis</keyword>
<dbReference type="EMBL" id="CP000088">
    <property type="protein sequence ID" value="AAZ56682.1"/>
    <property type="molecule type" value="Genomic_DNA"/>
</dbReference>
<dbReference type="RefSeq" id="WP_011293072.1">
    <property type="nucleotide sequence ID" value="NC_007333.1"/>
</dbReference>
<dbReference type="SMR" id="Q47LJ0"/>
<dbReference type="STRING" id="269800.Tfu_2649"/>
<dbReference type="KEGG" id="tfu:Tfu_2649"/>
<dbReference type="eggNOG" id="COG0480">
    <property type="taxonomic scope" value="Bacteria"/>
</dbReference>
<dbReference type="HOGENOM" id="CLU_002794_4_1_11"/>
<dbReference type="OrthoDB" id="3492050at2"/>
<dbReference type="GO" id="GO:0005737">
    <property type="term" value="C:cytoplasm"/>
    <property type="evidence" value="ECO:0007669"/>
    <property type="project" value="UniProtKB-SubCell"/>
</dbReference>
<dbReference type="GO" id="GO:0005525">
    <property type="term" value="F:GTP binding"/>
    <property type="evidence" value="ECO:0007669"/>
    <property type="project" value="UniProtKB-UniRule"/>
</dbReference>
<dbReference type="GO" id="GO:0003924">
    <property type="term" value="F:GTPase activity"/>
    <property type="evidence" value="ECO:0007669"/>
    <property type="project" value="InterPro"/>
</dbReference>
<dbReference type="GO" id="GO:0003746">
    <property type="term" value="F:translation elongation factor activity"/>
    <property type="evidence" value="ECO:0007669"/>
    <property type="project" value="UniProtKB-UniRule"/>
</dbReference>
<dbReference type="GO" id="GO:0032790">
    <property type="term" value="P:ribosome disassembly"/>
    <property type="evidence" value="ECO:0007669"/>
    <property type="project" value="TreeGrafter"/>
</dbReference>
<dbReference type="CDD" id="cd01886">
    <property type="entry name" value="EF-G"/>
    <property type="match status" value="1"/>
</dbReference>
<dbReference type="CDD" id="cd16262">
    <property type="entry name" value="EFG_III"/>
    <property type="match status" value="1"/>
</dbReference>
<dbReference type="CDD" id="cd01434">
    <property type="entry name" value="EFG_mtEFG1_IV"/>
    <property type="match status" value="1"/>
</dbReference>
<dbReference type="CDD" id="cd03713">
    <property type="entry name" value="EFG_mtEFG_C"/>
    <property type="match status" value="1"/>
</dbReference>
<dbReference type="CDD" id="cd04088">
    <property type="entry name" value="EFG_mtEFG_II"/>
    <property type="match status" value="1"/>
</dbReference>
<dbReference type="FunFam" id="2.40.30.10:FF:000006">
    <property type="entry name" value="Elongation factor G"/>
    <property type="match status" value="1"/>
</dbReference>
<dbReference type="FunFam" id="3.30.230.10:FF:000003">
    <property type="entry name" value="Elongation factor G"/>
    <property type="match status" value="1"/>
</dbReference>
<dbReference type="FunFam" id="3.30.70.240:FF:000001">
    <property type="entry name" value="Elongation factor G"/>
    <property type="match status" value="1"/>
</dbReference>
<dbReference type="FunFam" id="3.30.70.870:FF:000001">
    <property type="entry name" value="Elongation factor G"/>
    <property type="match status" value="1"/>
</dbReference>
<dbReference type="FunFam" id="3.40.50.300:FF:000029">
    <property type="entry name" value="Elongation factor G"/>
    <property type="match status" value="1"/>
</dbReference>
<dbReference type="Gene3D" id="3.30.230.10">
    <property type="match status" value="1"/>
</dbReference>
<dbReference type="Gene3D" id="3.30.70.240">
    <property type="match status" value="1"/>
</dbReference>
<dbReference type="Gene3D" id="3.30.70.870">
    <property type="entry name" value="Elongation Factor G (Translational Gtpase), domain 3"/>
    <property type="match status" value="1"/>
</dbReference>
<dbReference type="Gene3D" id="3.40.50.300">
    <property type="entry name" value="P-loop containing nucleotide triphosphate hydrolases"/>
    <property type="match status" value="1"/>
</dbReference>
<dbReference type="Gene3D" id="2.40.30.10">
    <property type="entry name" value="Translation factors"/>
    <property type="match status" value="1"/>
</dbReference>
<dbReference type="HAMAP" id="MF_00054_B">
    <property type="entry name" value="EF_G_EF_2_B"/>
    <property type="match status" value="1"/>
</dbReference>
<dbReference type="InterPro" id="IPR053905">
    <property type="entry name" value="EF-G-like_DII"/>
</dbReference>
<dbReference type="InterPro" id="IPR041095">
    <property type="entry name" value="EFG_II"/>
</dbReference>
<dbReference type="InterPro" id="IPR009022">
    <property type="entry name" value="EFG_III"/>
</dbReference>
<dbReference type="InterPro" id="IPR035647">
    <property type="entry name" value="EFG_III/V"/>
</dbReference>
<dbReference type="InterPro" id="IPR047872">
    <property type="entry name" value="EFG_IV"/>
</dbReference>
<dbReference type="InterPro" id="IPR035649">
    <property type="entry name" value="EFG_V"/>
</dbReference>
<dbReference type="InterPro" id="IPR000640">
    <property type="entry name" value="EFG_V-like"/>
</dbReference>
<dbReference type="InterPro" id="IPR031157">
    <property type="entry name" value="G_TR_CS"/>
</dbReference>
<dbReference type="InterPro" id="IPR027417">
    <property type="entry name" value="P-loop_NTPase"/>
</dbReference>
<dbReference type="InterPro" id="IPR020568">
    <property type="entry name" value="Ribosomal_Su5_D2-typ_SF"/>
</dbReference>
<dbReference type="InterPro" id="IPR014721">
    <property type="entry name" value="Ribsml_uS5_D2-typ_fold_subgr"/>
</dbReference>
<dbReference type="InterPro" id="IPR005225">
    <property type="entry name" value="Small_GTP-bd"/>
</dbReference>
<dbReference type="InterPro" id="IPR000795">
    <property type="entry name" value="T_Tr_GTP-bd_dom"/>
</dbReference>
<dbReference type="InterPro" id="IPR009000">
    <property type="entry name" value="Transl_B-barrel_sf"/>
</dbReference>
<dbReference type="InterPro" id="IPR004540">
    <property type="entry name" value="Transl_elong_EFG/EF2"/>
</dbReference>
<dbReference type="InterPro" id="IPR005517">
    <property type="entry name" value="Transl_elong_EFG/EF2_IV"/>
</dbReference>
<dbReference type="NCBIfam" id="TIGR00484">
    <property type="entry name" value="EF-G"/>
    <property type="match status" value="1"/>
</dbReference>
<dbReference type="NCBIfam" id="NF009379">
    <property type="entry name" value="PRK12740.1-3"/>
    <property type="match status" value="1"/>
</dbReference>
<dbReference type="NCBIfam" id="NF009381">
    <property type="entry name" value="PRK12740.1-5"/>
    <property type="match status" value="1"/>
</dbReference>
<dbReference type="NCBIfam" id="TIGR00231">
    <property type="entry name" value="small_GTP"/>
    <property type="match status" value="1"/>
</dbReference>
<dbReference type="PANTHER" id="PTHR43261:SF1">
    <property type="entry name" value="RIBOSOME-RELEASING FACTOR 2, MITOCHONDRIAL"/>
    <property type="match status" value="1"/>
</dbReference>
<dbReference type="PANTHER" id="PTHR43261">
    <property type="entry name" value="TRANSLATION ELONGATION FACTOR G-RELATED"/>
    <property type="match status" value="1"/>
</dbReference>
<dbReference type="Pfam" id="PF22042">
    <property type="entry name" value="EF-G_D2"/>
    <property type="match status" value="1"/>
</dbReference>
<dbReference type="Pfam" id="PF00679">
    <property type="entry name" value="EFG_C"/>
    <property type="match status" value="1"/>
</dbReference>
<dbReference type="Pfam" id="PF14492">
    <property type="entry name" value="EFG_III"/>
    <property type="match status" value="1"/>
</dbReference>
<dbReference type="Pfam" id="PF03764">
    <property type="entry name" value="EFG_IV"/>
    <property type="match status" value="1"/>
</dbReference>
<dbReference type="Pfam" id="PF00009">
    <property type="entry name" value="GTP_EFTU"/>
    <property type="match status" value="1"/>
</dbReference>
<dbReference type="PRINTS" id="PR00315">
    <property type="entry name" value="ELONGATNFCT"/>
</dbReference>
<dbReference type="SMART" id="SM00838">
    <property type="entry name" value="EFG_C"/>
    <property type="match status" value="1"/>
</dbReference>
<dbReference type="SMART" id="SM00889">
    <property type="entry name" value="EFG_IV"/>
    <property type="match status" value="1"/>
</dbReference>
<dbReference type="SUPFAM" id="SSF54980">
    <property type="entry name" value="EF-G C-terminal domain-like"/>
    <property type="match status" value="2"/>
</dbReference>
<dbReference type="SUPFAM" id="SSF52540">
    <property type="entry name" value="P-loop containing nucleoside triphosphate hydrolases"/>
    <property type="match status" value="1"/>
</dbReference>
<dbReference type="SUPFAM" id="SSF54211">
    <property type="entry name" value="Ribosomal protein S5 domain 2-like"/>
    <property type="match status" value="1"/>
</dbReference>
<dbReference type="SUPFAM" id="SSF50447">
    <property type="entry name" value="Translation proteins"/>
    <property type="match status" value="1"/>
</dbReference>
<dbReference type="PROSITE" id="PS00301">
    <property type="entry name" value="G_TR_1"/>
    <property type="match status" value="1"/>
</dbReference>
<dbReference type="PROSITE" id="PS51722">
    <property type="entry name" value="G_TR_2"/>
    <property type="match status" value="1"/>
</dbReference>
<sequence>MATTALDLAKVRNIGIMAHIDAGKTTTTERILFYTGVNYKLGETHEGSATMDWMKEEQERGITITSAATTCRWNDTTINIIDTPGHVDFTIEVERSLRVLDGAVAVFDGKEGVEPQSEQVWRQADRYNVPRICFVNKMDKIGADFQRCVDMIRERLGANPLAVQLPIGAESDFQGVIDLIRMKAYVWSPDAPKGEMYDTIEIPDAYAEAAQEGHERLVEAVAEADDEIMELYLEGQEPTVEQLVAAIRRATISGAAVPVLCGSAFKNKGVQPLLDAIVAYLPSPLDIEAIEGHDPQDKDEEVTLQRKPSEEEPLAALAFKIMSDQHLGKLTYLRIYSGVLESGMQVLNSIKGRKERIGKIYRMHANKREEITRVGAGDIVAVVGLKDTTTGETLCDQANPIVLESMTFPAPVIEVAIEPKTKSDQEKLGTAIQRLAEEDPSFRVTTDEETGQTVISGMGELHLEVLVNRMREEFKVEANIGKPQVAYRETIRRKVEGVEYTHKKQTGGAGQYGRVVIDLEPLPIDGDGDSPGYEFVNNITGGRIPREYIPSVDAGCQEAAQFGVLAGYPLVGIKVTLQDGAYHDVDSSELAFKIAGSMAFKEAASKANPVLLEPVMAVEVTTPEEYMGDVIGDLNSRRGQIQSMEERAGTRVVKALVPLSEMFGYVGDLRSRTQGRANYTMVFHSYAEVPSNVSQEIVAKARGE</sequence>
<evidence type="ECO:0000255" key="1">
    <source>
        <dbReference type="HAMAP-Rule" id="MF_00054"/>
    </source>
</evidence>
<gene>
    <name evidence="1" type="primary">fusA</name>
    <name type="ordered locus">Tfu_2649</name>
</gene>
<feature type="chain" id="PRO_0000225245" description="Elongation factor G">
    <location>
        <begin position="1"/>
        <end position="704"/>
    </location>
</feature>
<feature type="domain" description="tr-type G">
    <location>
        <begin position="9"/>
        <end position="285"/>
    </location>
</feature>
<feature type="binding site" evidence="1">
    <location>
        <begin position="18"/>
        <end position="25"/>
    </location>
    <ligand>
        <name>GTP</name>
        <dbReference type="ChEBI" id="CHEBI:37565"/>
    </ligand>
</feature>
<feature type="binding site" evidence="1">
    <location>
        <begin position="82"/>
        <end position="86"/>
    </location>
    <ligand>
        <name>GTP</name>
        <dbReference type="ChEBI" id="CHEBI:37565"/>
    </ligand>
</feature>
<feature type="binding site" evidence="1">
    <location>
        <begin position="136"/>
        <end position="139"/>
    </location>
    <ligand>
        <name>GTP</name>
        <dbReference type="ChEBI" id="CHEBI:37565"/>
    </ligand>
</feature>
<organism>
    <name type="scientific">Thermobifida fusca (strain YX)</name>
    <dbReference type="NCBI Taxonomy" id="269800"/>
    <lineage>
        <taxon>Bacteria</taxon>
        <taxon>Bacillati</taxon>
        <taxon>Actinomycetota</taxon>
        <taxon>Actinomycetes</taxon>
        <taxon>Streptosporangiales</taxon>
        <taxon>Nocardiopsidaceae</taxon>
        <taxon>Thermobifida</taxon>
    </lineage>
</organism>
<reference key="1">
    <citation type="journal article" date="2007" name="J. Bacteriol.">
        <title>Genome sequence and analysis of the soil cellulolytic actinomycete Thermobifida fusca YX.</title>
        <authorList>
            <person name="Lykidis A."/>
            <person name="Mavromatis K."/>
            <person name="Ivanova N."/>
            <person name="Anderson I."/>
            <person name="Land M."/>
            <person name="DiBartolo G."/>
            <person name="Martinez M."/>
            <person name="Lapidus A."/>
            <person name="Lucas S."/>
            <person name="Copeland A."/>
            <person name="Richardson P."/>
            <person name="Wilson D.B."/>
            <person name="Kyrpides N."/>
        </authorList>
    </citation>
    <scope>NUCLEOTIDE SEQUENCE [LARGE SCALE GENOMIC DNA]</scope>
    <source>
        <strain>YX</strain>
    </source>
</reference>
<accession>Q47LJ0</accession>